<comment type="function">
    <text>Catalyzes the synthesis of phosphoribosylpyrophosphate (PRPP) that is essential for nucleotide synthesis.</text>
</comment>
<comment type="catalytic activity">
    <reaction>
        <text>D-ribose 5-phosphate + ATP = 5-phospho-alpha-D-ribose 1-diphosphate + AMP + H(+)</text>
        <dbReference type="Rhea" id="RHEA:15609"/>
        <dbReference type="ChEBI" id="CHEBI:15378"/>
        <dbReference type="ChEBI" id="CHEBI:30616"/>
        <dbReference type="ChEBI" id="CHEBI:58017"/>
        <dbReference type="ChEBI" id="CHEBI:78346"/>
        <dbReference type="ChEBI" id="CHEBI:456215"/>
        <dbReference type="EC" id="2.7.6.1"/>
    </reaction>
</comment>
<comment type="cofactor">
    <cofactor evidence="1">
        <name>Mg(2+)</name>
        <dbReference type="ChEBI" id="CHEBI:18420"/>
    </cofactor>
</comment>
<comment type="activity regulation">
    <text evidence="1">Activated by magnesium and inorganic phosphate.</text>
</comment>
<comment type="pathway">
    <text>Metabolic intermediate biosynthesis; 5-phospho-alpha-D-ribose 1-diphosphate biosynthesis; 5-phospho-alpha-D-ribose 1-diphosphate from D-ribose 5-phosphate (route I): step 1/1.</text>
</comment>
<comment type="subunit">
    <text evidence="1">Homodimer. The active form is probably a hexamer composed of 3 homodimers (By similarity).</text>
</comment>
<comment type="similarity">
    <text evidence="3">Belongs to the ribose-phosphate pyrophosphokinase family.</text>
</comment>
<organism>
    <name type="scientific">Pongo abelii</name>
    <name type="common">Sumatran orangutan</name>
    <name type="synonym">Pongo pygmaeus abelii</name>
    <dbReference type="NCBI Taxonomy" id="9601"/>
    <lineage>
        <taxon>Eukaryota</taxon>
        <taxon>Metazoa</taxon>
        <taxon>Chordata</taxon>
        <taxon>Craniata</taxon>
        <taxon>Vertebrata</taxon>
        <taxon>Euteleostomi</taxon>
        <taxon>Mammalia</taxon>
        <taxon>Eutheria</taxon>
        <taxon>Euarchontoglires</taxon>
        <taxon>Primates</taxon>
        <taxon>Haplorrhini</taxon>
        <taxon>Catarrhini</taxon>
        <taxon>Hominidae</taxon>
        <taxon>Pongo</taxon>
    </lineage>
</organism>
<evidence type="ECO:0000250" key="1"/>
<evidence type="ECO:0000255" key="2"/>
<evidence type="ECO:0000305" key="3"/>
<reference key="1">
    <citation type="submission" date="2004-11" db="EMBL/GenBank/DDBJ databases">
        <authorList>
            <consortium name="The German cDNA consortium"/>
        </authorList>
    </citation>
    <scope>NUCLEOTIDE SEQUENCE [LARGE SCALE MRNA]</scope>
    <source>
        <tissue>Kidney</tissue>
    </source>
</reference>
<dbReference type="EC" id="2.7.6.1"/>
<dbReference type="EMBL" id="CR857159">
    <property type="protein sequence ID" value="CAH89460.1"/>
    <property type="molecule type" value="mRNA"/>
</dbReference>
<dbReference type="RefSeq" id="NP_001124627.1">
    <property type="nucleotide sequence ID" value="NM_001131155.1"/>
</dbReference>
<dbReference type="SMR" id="Q5RFJ7"/>
<dbReference type="FunCoup" id="Q5RFJ7">
    <property type="interactions" value="1552"/>
</dbReference>
<dbReference type="STRING" id="9601.ENSPPYP00000023072"/>
<dbReference type="GeneID" id="100171465"/>
<dbReference type="KEGG" id="pon:100171465"/>
<dbReference type="CTD" id="5631"/>
<dbReference type="eggNOG" id="KOG1448">
    <property type="taxonomic scope" value="Eukaryota"/>
</dbReference>
<dbReference type="InParanoid" id="Q5RFJ7"/>
<dbReference type="OrthoDB" id="9473042at2759"/>
<dbReference type="UniPathway" id="UPA00087">
    <property type="reaction ID" value="UER00172"/>
</dbReference>
<dbReference type="Proteomes" id="UP000001595">
    <property type="component" value="Unplaced"/>
</dbReference>
<dbReference type="GO" id="GO:0005737">
    <property type="term" value="C:cytoplasm"/>
    <property type="evidence" value="ECO:0007669"/>
    <property type="project" value="TreeGrafter"/>
</dbReference>
<dbReference type="GO" id="GO:0002189">
    <property type="term" value="C:ribose phosphate diphosphokinase complex"/>
    <property type="evidence" value="ECO:0007669"/>
    <property type="project" value="TreeGrafter"/>
</dbReference>
<dbReference type="GO" id="GO:0005524">
    <property type="term" value="F:ATP binding"/>
    <property type="evidence" value="ECO:0000250"/>
    <property type="project" value="UniProtKB"/>
</dbReference>
<dbReference type="GO" id="GO:0016301">
    <property type="term" value="F:kinase activity"/>
    <property type="evidence" value="ECO:0007669"/>
    <property type="project" value="UniProtKB-KW"/>
</dbReference>
<dbReference type="GO" id="GO:0000287">
    <property type="term" value="F:magnesium ion binding"/>
    <property type="evidence" value="ECO:0007669"/>
    <property type="project" value="InterPro"/>
</dbReference>
<dbReference type="GO" id="GO:0042803">
    <property type="term" value="F:protein homodimerization activity"/>
    <property type="evidence" value="ECO:0000250"/>
    <property type="project" value="UniProtKB"/>
</dbReference>
<dbReference type="GO" id="GO:0004749">
    <property type="term" value="F:ribose phosphate diphosphokinase activity"/>
    <property type="evidence" value="ECO:0000250"/>
    <property type="project" value="UniProtKB"/>
</dbReference>
<dbReference type="GO" id="GO:0006015">
    <property type="term" value="P:5-phosphoribose 1-diphosphate biosynthetic process"/>
    <property type="evidence" value="ECO:0007669"/>
    <property type="project" value="UniProtKB-UniPathway"/>
</dbReference>
<dbReference type="GO" id="GO:0006164">
    <property type="term" value="P:purine nucleotide biosynthetic process"/>
    <property type="evidence" value="ECO:0007669"/>
    <property type="project" value="TreeGrafter"/>
</dbReference>
<dbReference type="GO" id="GO:0009156">
    <property type="term" value="P:ribonucleoside monophosphate biosynthetic process"/>
    <property type="evidence" value="ECO:0007669"/>
    <property type="project" value="InterPro"/>
</dbReference>
<dbReference type="CDD" id="cd06223">
    <property type="entry name" value="PRTases_typeI"/>
    <property type="match status" value="1"/>
</dbReference>
<dbReference type="FunFam" id="3.40.50.2020:FF:000031">
    <property type="entry name" value="Probable PRS4-ribose-phosphate pyrophosphokinase 3"/>
    <property type="match status" value="1"/>
</dbReference>
<dbReference type="FunFam" id="3.40.50.2020:FF:000005">
    <property type="entry name" value="Ribose-phosphate pyrophosphokinase 1"/>
    <property type="match status" value="1"/>
</dbReference>
<dbReference type="Gene3D" id="3.40.50.2020">
    <property type="match status" value="2"/>
</dbReference>
<dbReference type="HAMAP" id="MF_00583_B">
    <property type="entry name" value="RibP_PPkinase_B"/>
    <property type="match status" value="1"/>
</dbReference>
<dbReference type="InterPro" id="IPR000842">
    <property type="entry name" value="PRib_PP_synth_CS"/>
</dbReference>
<dbReference type="InterPro" id="IPR029099">
    <property type="entry name" value="Pribosyltran_N"/>
</dbReference>
<dbReference type="InterPro" id="IPR000836">
    <property type="entry name" value="PRibTrfase_dom"/>
</dbReference>
<dbReference type="InterPro" id="IPR029057">
    <property type="entry name" value="PRTase-like"/>
</dbReference>
<dbReference type="InterPro" id="IPR005946">
    <property type="entry name" value="Rib-P_diPkinase"/>
</dbReference>
<dbReference type="InterPro" id="IPR037515">
    <property type="entry name" value="Rib-P_diPkinase_bac"/>
</dbReference>
<dbReference type="NCBIfam" id="NF002320">
    <property type="entry name" value="PRK01259.1"/>
    <property type="match status" value="1"/>
</dbReference>
<dbReference type="NCBIfam" id="TIGR01251">
    <property type="entry name" value="ribP_PPkin"/>
    <property type="match status" value="1"/>
</dbReference>
<dbReference type="PANTHER" id="PTHR10210">
    <property type="entry name" value="RIBOSE-PHOSPHATE DIPHOSPHOKINASE FAMILY MEMBER"/>
    <property type="match status" value="1"/>
</dbReference>
<dbReference type="PANTHER" id="PTHR10210:SF118">
    <property type="entry name" value="RIBOSE-PHOSPHATE PYROPHOSPHOKINASE 1"/>
    <property type="match status" value="1"/>
</dbReference>
<dbReference type="Pfam" id="PF14572">
    <property type="entry name" value="Pribosyl_synth"/>
    <property type="match status" value="1"/>
</dbReference>
<dbReference type="Pfam" id="PF13793">
    <property type="entry name" value="Pribosyltran_N"/>
    <property type="match status" value="1"/>
</dbReference>
<dbReference type="SMART" id="SM01400">
    <property type="entry name" value="Pribosyltran_N"/>
    <property type="match status" value="1"/>
</dbReference>
<dbReference type="SUPFAM" id="SSF53271">
    <property type="entry name" value="PRTase-like"/>
    <property type="match status" value="1"/>
</dbReference>
<dbReference type="PROSITE" id="PS00114">
    <property type="entry name" value="PRPP_SYNTHASE"/>
    <property type="match status" value="1"/>
</dbReference>
<name>PRPS1_PONAB</name>
<gene>
    <name type="primary">PRPS1</name>
</gene>
<feature type="chain" id="PRO_0000294081" description="Ribose-phosphate pyrophosphokinase 1">
    <location>
        <begin position="1"/>
        <end position="318"/>
    </location>
</feature>
<feature type="region of interest" description="Binding of phosphoribosylpyrophosphate" evidence="2">
    <location>
        <begin position="212"/>
        <end position="227"/>
    </location>
</feature>
<feature type="binding site" evidence="1">
    <location>
        <begin position="96"/>
        <end position="101"/>
    </location>
    <ligand>
        <name>ATP</name>
        <dbReference type="ChEBI" id="CHEBI:30616"/>
    </ligand>
</feature>
<feature type="binding site" evidence="2">
    <location>
        <position position="128"/>
    </location>
    <ligand>
        <name>Mg(2+)</name>
        <dbReference type="ChEBI" id="CHEBI:18420"/>
    </ligand>
</feature>
<feature type="binding site" evidence="1">
    <location>
        <position position="130"/>
    </location>
    <ligand>
        <name>ATP</name>
        <dbReference type="ChEBI" id="CHEBI:30616"/>
    </ligand>
</feature>
<feature type="binding site" evidence="2">
    <location>
        <position position="130"/>
    </location>
    <ligand>
        <name>Mg(2+)</name>
        <dbReference type="ChEBI" id="CHEBI:18420"/>
    </ligand>
</feature>
<feature type="binding site" evidence="2">
    <location>
        <position position="139"/>
    </location>
    <ligand>
        <name>Mg(2+)</name>
        <dbReference type="ChEBI" id="CHEBI:18420"/>
    </ligand>
</feature>
<feature type="binding site" evidence="2">
    <location>
        <position position="143"/>
    </location>
    <ligand>
        <name>Mg(2+)</name>
        <dbReference type="ChEBI" id="CHEBI:18420"/>
    </ligand>
</feature>
<proteinExistence type="evidence at transcript level"/>
<sequence>MPNIKIFSGSSHQDLSQKIADRLGLELGKVVTKKFSNQETCVEIGESVRGEDVYIVQSGCGEINDNLMELLIMINACKIASASRVTAVIPCFPYARQDKKDKSRAPISAKLVANMLSVAGADHIITMDLHASQIQGFFDIPVDNLYAEPAVLKWIRENISEWRNCTIVSPDAGGAKRVTSIADRLNVDFALIHKERKKANEVDRMVLVGDVKDRVAILVDDMADTCGTICHAADKLLSAGATRVYAILTHGIFSGPAISRINNACFEAVVVTNTIPQEDKMKHCSKIQVIDISMILAEAIRRTHNGESVSYLFSHVPL</sequence>
<accession>Q5RFJ7</accession>
<keyword id="KW-0067">ATP-binding</keyword>
<keyword id="KW-0418">Kinase</keyword>
<keyword id="KW-0460">Magnesium</keyword>
<keyword id="KW-0479">Metal-binding</keyword>
<keyword id="KW-0545">Nucleotide biosynthesis</keyword>
<keyword id="KW-0547">Nucleotide-binding</keyword>
<keyword id="KW-1185">Reference proteome</keyword>
<keyword id="KW-0808">Transferase</keyword>
<protein>
    <recommendedName>
        <fullName>Ribose-phosphate pyrophosphokinase 1</fullName>
        <ecNumber>2.7.6.1</ecNumber>
    </recommendedName>
    <alternativeName>
        <fullName>Phosphoribosyl pyrophosphate synthase I</fullName>
        <shortName>PRS-I</shortName>
    </alternativeName>
</protein>